<comment type="function">
    <text evidence="1">One of the essential components for the initiation of protein synthesis. Stabilizes the binding of IF-2 and IF-3 on the 30S subunit to which N-formylmethionyl-tRNA(fMet) subsequently binds. Helps modulate mRNA selection, yielding the 30S pre-initiation complex (PIC). Upon addition of the 50S ribosomal subunit IF-1, IF-2 and IF-3 are released leaving the mature 70S translation initiation complex.</text>
</comment>
<comment type="subunit">
    <text evidence="1">Component of the 30S ribosomal translation pre-initiation complex which assembles on the 30S ribosome in the order IF-2 and IF-3, IF-1 and N-formylmethionyl-tRNA(fMet); mRNA recruitment can occur at any time during PIC assembly.</text>
</comment>
<comment type="subcellular location">
    <subcellularLocation>
        <location evidence="1">Cytoplasm</location>
    </subcellularLocation>
</comment>
<comment type="similarity">
    <text evidence="1">Belongs to the IF-1 family.</text>
</comment>
<gene>
    <name evidence="1" type="primary">infA</name>
    <name type="ordered locus">Oant_0323</name>
</gene>
<accession>A6WVQ0</accession>
<reference key="1">
    <citation type="journal article" date="2011" name="J. Bacteriol.">
        <title>Genome of Ochrobactrum anthropi ATCC 49188 T, a versatile opportunistic pathogen and symbiont of several eukaryotic hosts.</title>
        <authorList>
            <person name="Chain P.S."/>
            <person name="Lang D.M."/>
            <person name="Comerci D.J."/>
            <person name="Malfatti S.A."/>
            <person name="Vergez L.M."/>
            <person name="Shin M."/>
            <person name="Ugalde R.A."/>
            <person name="Garcia E."/>
            <person name="Tolmasky M.E."/>
        </authorList>
    </citation>
    <scope>NUCLEOTIDE SEQUENCE [LARGE SCALE GENOMIC DNA]</scope>
    <source>
        <strain>ATCC 49188 / DSM 6882 / CCUG 24695 / JCM 21032 / LMG 3331 / NBRC 15819 / NCTC 12168 / Alc 37</strain>
    </source>
</reference>
<sequence length="72" mass="8372">MAKEEVLEFPGVVTELLPNAMFRVKLENEHEIIAHTAGRMRKNRIRVLAGDKVLVEMTPYDLTKGRITYRFK</sequence>
<organism>
    <name type="scientific">Brucella anthropi (strain ATCC 49188 / DSM 6882 / CCUG 24695 / JCM 21032 / LMG 3331 / NBRC 15819 / NCTC 12168 / Alc 37)</name>
    <name type="common">Ochrobactrum anthropi</name>
    <dbReference type="NCBI Taxonomy" id="439375"/>
    <lineage>
        <taxon>Bacteria</taxon>
        <taxon>Pseudomonadati</taxon>
        <taxon>Pseudomonadota</taxon>
        <taxon>Alphaproteobacteria</taxon>
        <taxon>Hyphomicrobiales</taxon>
        <taxon>Brucellaceae</taxon>
        <taxon>Brucella/Ochrobactrum group</taxon>
        <taxon>Brucella</taxon>
    </lineage>
</organism>
<name>IF1_BRUA4</name>
<keyword id="KW-0963">Cytoplasm</keyword>
<keyword id="KW-0396">Initiation factor</keyword>
<keyword id="KW-0648">Protein biosynthesis</keyword>
<keyword id="KW-1185">Reference proteome</keyword>
<keyword id="KW-0694">RNA-binding</keyword>
<keyword id="KW-0699">rRNA-binding</keyword>
<evidence type="ECO:0000255" key="1">
    <source>
        <dbReference type="HAMAP-Rule" id="MF_00075"/>
    </source>
</evidence>
<dbReference type="EMBL" id="CP000758">
    <property type="protein sequence ID" value="ABS13054.1"/>
    <property type="molecule type" value="Genomic_DNA"/>
</dbReference>
<dbReference type="RefSeq" id="WP_002965531.1">
    <property type="nucleotide sequence ID" value="NC_009667.1"/>
</dbReference>
<dbReference type="SMR" id="A6WVQ0"/>
<dbReference type="STRING" id="439375.Oant_0323"/>
<dbReference type="GeneID" id="97534350"/>
<dbReference type="KEGG" id="oan:Oant_0323"/>
<dbReference type="eggNOG" id="COG0361">
    <property type="taxonomic scope" value="Bacteria"/>
</dbReference>
<dbReference type="HOGENOM" id="CLU_151267_1_0_5"/>
<dbReference type="Proteomes" id="UP000002301">
    <property type="component" value="Chromosome 1"/>
</dbReference>
<dbReference type="GO" id="GO:0005829">
    <property type="term" value="C:cytosol"/>
    <property type="evidence" value="ECO:0007669"/>
    <property type="project" value="TreeGrafter"/>
</dbReference>
<dbReference type="GO" id="GO:0043022">
    <property type="term" value="F:ribosome binding"/>
    <property type="evidence" value="ECO:0007669"/>
    <property type="project" value="UniProtKB-UniRule"/>
</dbReference>
<dbReference type="GO" id="GO:0019843">
    <property type="term" value="F:rRNA binding"/>
    <property type="evidence" value="ECO:0007669"/>
    <property type="project" value="UniProtKB-UniRule"/>
</dbReference>
<dbReference type="GO" id="GO:0003743">
    <property type="term" value="F:translation initiation factor activity"/>
    <property type="evidence" value="ECO:0007669"/>
    <property type="project" value="UniProtKB-UniRule"/>
</dbReference>
<dbReference type="CDD" id="cd04451">
    <property type="entry name" value="S1_IF1"/>
    <property type="match status" value="1"/>
</dbReference>
<dbReference type="FunFam" id="2.40.50.140:FF:000002">
    <property type="entry name" value="Translation initiation factor IF-1"/>
    <property type="match status" value="1"/>
</dbReference>
<dbReference type="Gene3D" id="2.40.50.140">
    <property type="entry name" value="Nucleic acid-binding proteins"/>
    <property type="match status" value="1"/>
</dbReference>
<dbReference type="HAMAP" id="MF_00075">
    <property type="entry name" value="IF_1"/>
    <property type="match status" value="1"/>
</dbReference>
<dbReference type="InterPro" id="IPR012340">
    <property type="entry name" value="NA-bd_OB-fold"/>
</dbReference>
<dbReference type="InterPro" id="IPR006196">
    <property type="entry name" value="RNA-binding_domain_S1_IF1"/>
</dbReference>
<dbReference type="InterPro" id="IPR003029">
    <property type="entry name" value="S1_domain"/>
</dbReference>
<dbReference type="InterPro" id="IPR004368">
    <property type="entry name" value="TIF_IF1"/>
</dbReference>
<dbReference type="NCBIfam" id="TIGR00008">
    <property type="entry name" value="infA"/>
    <property type="match status" value="1"/>
</dbReference>
<dbReference type="PANTHER" id="PTHR33370">
    <property type="entry name" value="TRANSLATION INITIATION FACTOR IF-1, CHLOROPLASTIC"/>
    <property type="match status" value="1"/>
</dbReference>
<dbReference type="PANTHER" id="PTHR33370:SF1">
    <property type="entry name" value="TRANSLATION INITIATION FACTOR IF-1, CHLOROPLASTIC"/>
    <property type="match status" value="1"/>
</dbReference>
<dbReference type="Pfam" id="PF01176">
    <property type="entry name" value="eIF-1a"/>
    <property type="match status" value="1"/>
</dbReference>
<dbReference type="SMART" id="SM00316">
    <property type="entry name" value="S1"/>
    <property type="match status" value="1"/>
</dbReference>
<dbReference type="SUPFAM" id="SSF50249">
    <property type="entry name" value="Nucleic acid-binding proteins"/>
    <property type="match status" value="1"/>
</dbReference>
<dbReference type="PROSITE" id="PS50832">
    <property type="entry name" value="S1_IF1_TYPE"/>
    <property type="match status" value="1"/>
</dbReference>
<protein>
    <recommendedName>
        <fullName evidence="1">Translation initiation factor IF-1</fullName>
    </recommendedName>
</protein>
<feature type="chain" id="PRO_0000338874" description="Translation initiation factor IF-1">
    <location>
        <begin position="1"/>
        <end position="72"/>
    </location>
</feature>
<feature type="domain" description="S1-like" evidence="1">
    <location>
        <begin position="1"/>
        <end position="72"/>
    </location>
</feature>
<proteinExistence type="inferred from homology"/>